<organism>
    <name type="scientific">Rattus norvegicus</name>
    <name type="common">Rat</name>
    <dbReference type="NCBI Taxonomy" id="10116"/>
    <lineage>
        <taxon>Eukaryota</taxon>
        <taxon>Metazoa</taxon>
        <taxon>Chordata</taxon>
        <taxon>Craniata</taxon>
        <taxon>Vertebrata</taxon>
        <taxon>Euteleostomi</taxon>
        <taxon>Mammalia</taxon>
        <taxon>Eutheria</taxon>
        <taxon>Euarchontoglires</taxon>
        <taxon>Glires</taxon>
        <taxon>Rodentia</taxon>
        <taxon>Myomorpha</taxon>
        <taxon>Muroidea</taxon>
        <taxon>Muridae</taxon>
        <taxon>Murinae</taxon>
        <taxon>Rattus</taxon>
    </lineage>
</organism>
<accession>P27881</accession>
<accession>Q9QWR1</accession>
<name>HXK2_RAT</name>
<evidence type="ECO:0000250" key="1">
    <source>
        <dbReference type="UniProtKB" id="P19367"/>
    </source>
</evidence>
<evidence type="ECO:0000250" key="2">
    <source>
        <dbReference type="UniProtKB" id="P52789"/>
    </source>
</evidence>
<evidence type="ECO:0000255" key="3">
    <source>
        <dbReference type="PROSITE-ProRule" id="PRU01084"/>
    </source>
</evidence>
<evidence type="ECO:0000269" key="4">
    <source>
    </source>
</evidence>
<evidence type="ECO:0000303" key="5">
    <source>
    </source>
</evidence>
<evidence type="ECO:0000303" key="6">
    <source>
    </source>
</evidence>
<evidence type="ECO:0000305" key="7"/>
<evidence type="ECO:0000305" key="8">
    <source>
    </source>
</evidence>
<evidence type="ECO:0000312" key="9">
    <source>
        <dbReference type="RGD" id="2797"/>
    </source>
</evidence>
<protein>
    <recommendedName>
        <fullName evidence="7">Hexokinase-2</fullName>
        <ecNumber evidence="4">2.7.1.1</ecNumber>
    </recommendedName>
    <alternativeName>
        <fullName evidence="5">Hexokinase type II</fullName>
        <shortName evidence="5">HK II</shortName>
    </alternativeName>
    <alternativeName>
        <fullName evidence="6">Hexokinase-B</fullName>
    </alternativeName>
</protein>
<proteinExistence type="evidence at protein level"/>
<keyword id="KW-0007">Acetylation</keyword>
<keyword id="KW-0021">Allosteric enzyme</keyword>
<keyword id="KW-0067">ATP-binding</keyword>
<keyword id="KW-0963">Cytoplasm</keyword>
<keyword id="KW-0903">Direct protein sequencing</keyword>
<keyword id="KW-0324">Glycolysis</keyword>
<keyword id="KW-0418">Kinase</keyword>
<keyword id="KW-0472">Membrane</keyword>
<keyword id="KW-0496">Mitochondrion</keyword>
<keyword id="KW-1000">Mitochondrion outer membrane</keyword>
<keyword id="KW-0547">Nucleotide-binding</keyword>
<keyword id="KW-1185">Reference proteome</keyword>
<keyword id="KW-0677">Repeat</keyword>
<keyword id="KW-0808">Transferase</keyword>
<reference key="1">
    <citation type="journal article" date="1991" name="Arch. Biochem. Biophys.">
        <title>Complete amino acid sequence of the type II isozyme of rat hexokinase, deduced from the cloned cDNA: comparison with a hexokinase from novikoff ascites tumor.</title>
        <authorList>
            <person name="Thelen A.P."/>
            <person name="Wilson J.E."/>
        </authorList>
    </citation>
    <scope>NUCLEOTIDE SEQUENCE [MRNA]</scope>
    <scope>PROTEIN SEQUENCE OF 11-18</scope>
    <source>
        <tissue>Skeletal muscle</tissue>
    </source>
</reference>
<reference key="2">
    <citation type="journal article" date="1995" name="Biochim. Biophys. Acta">
        <title>Nucleotide sequence of the 5'-flanking region of the rat type II hexokinase gene.</title>
        <authorList>
            <person name="Shinohara Y."/>
            <person name="Ichihara J."/>
            <person name="Kogure K."/>
            <person name="Terada H."/>
        </authorList>
    </citation>
    <scope>NUCLEOTIDE SEQUENCE [GENOMIC DNA] OF 1-21</scope>
    <source>
        <strain>Wistar</strain>
    </source>
</reference>
<reference key="3">
    <citation type="journal article" date="1995" name="J. Biol. Chem.">
        <title>Glucose catabolism in cancer cells. Isolation, sequence, and activity of the promoter for type II hexokinase.</title>
        <authorList>
            <person name="Mathupala S.P."/>
            <person name="Rempel A."/>
            <person name="Pedersen P.L."/>
        </authorList>
    </citation>
    <scope>NUCLEOTIDE SEQUENCE [GENOMIC DNA] OF 1-21</scope>
    <source>
        <strain>Sprague-Dawley</strain>
        <tissue>Hepatoma</tissue>
    </source>
</reference>
<reference key="4">
    <citation type="submission" date="2002-03" db="EMBL/GenBank/DDBJ databases">
        <title>Normal type II hexokinase promoter, first exon, and first intron from hepatocytes.</title>
        <authorList>
            <person name="Rempel A."/>
        </authorList>
    </citation>
    <scope>NUCLEOTIDE SEQUENCE [GENOMIC DNA] OF 1-21</scope>
    <source>
        <strain>Sprague-Dawley</strain>
    </source>
</reference>
<reference key="5">
    <citation type="journal article" date="1964" name="Biochem. Biophys. Res. Commun.">
        <title>Multiple molecular forms of ATP:hexose 6-phosphotransferase from rat liver.</title>
        <authorList>
            <person name="Gonzalez C."/>
            <person name="Ureta T."/>
            <person name="Sanchez R."/>
            <person name="Niemeyer H."/>
        </authorList>
    </citation>
    <scope>FUNCTION</scope>
    <scope>CATALYTIC ACTIVITY</scope>
    <scope>BIOPHYSICOCHEMICAL PROPERTIES</scope>
</reference>
<reference key="6">
    <citation type="journal article" date="1982" name="Comp. Biochem. Physiol.">
        <title>The comparative isozymology of vertebrate hexokinases.</title>
        <authorList>
            <person name="Ureta T."/>
        </authorList>
    </citation>
    <scope>REVIEW</scope>
</reference>
<gene>
    <name evidence="9" type="primary">Hk2</name>
</gene>
<feature type="chain" id="PRO_0000197589" description="Hexokinase-2">
    <location>
        <begin position="1"/>
        <end position="917"/>
    </location>
</feature>
<feature type="domain" description="Hexokinase 1" evidence="3">
    <location>
        <begin position="16"/>
        <end position="458"/>
    </location>
</feature>
<feature type="domain" description="Hexokinase 2" evidence="3">
    <location>
        <begin position="464"/>
        <end position="906"/>
    </location>
</feature>
<feature type="region of interest" description="Mitochondrial-binding peptide (MBP)" evidence="2">
    <location>
        <begin position="1"/>
        <end position="16"/>
    </location>
</feature>
<feature type="region of interest" description="Hexokinase small subdomain 1" evidence="3">
    <location>
        <begin position="73"/>
        <end position="207"/>
    </location>
</feature>
<feature type="region of interest" description="Hexokinase large subdomain 1" evidence="3">
    <location>
        <begin position="208"/>
        <end position="447"/>
    </location>
</feature>
<feature type="region of interest" description="Hexokinase small subdomain 2" evidence="3">
    <location>
        <begin position="521"/>
        <end position="655"/>
    </location>
</feature>
<feature type="region of interest" description="Hexokinase large subdomain 2" evidence="3">
    <location>
        <begin position="656"/>
        <end position="895"/>
    </location>
</feature>
<feature type="binding site" evidence="1">
    <location>
        <position position="30"/>
    </location>
    <ligand>
        <name>ATP</name>
        <dbReference type="ChEBI" id="CHEBI:30616"/>
        <label>1</label>
    </ligand>
</feature>
<feature type="binding site" evidence="1">
    <location>
        <begin position="84"/>
        <end position="89"/>
    </location>
    <ligand>
        <name>ATP</name>
        <dbReference type="ChEBI" id="CHEBI:30616"/>
        <label>1</label>
    </ligand>
</feature>
<feature type="binding site" evidence="2">
    <location>
        <begin position="84"/>
        <end position="88"/>
    </location>
    <ligand>
        <name>D-glucose 6-phosphate</name>
        <dbReference type="ChEBI" id="CHEBI:61548"/>
        <label>1</label>
    </ligand>
</feature>
<feature type="binding site" evidence="2">
    <location>
        <begin position="155"/>
        <end position="156"/>
    </location>
    <ligand>
        <name>D-glucose</name>
        <dbReference type="ChEBI" id="CHEBI:4167"/>
        <label>1</label>
    </ligand>
</feature>
<feature type="binding site" evidence="2">
    <location>
        <begin position="172"/>
        <end position="173"/>
    </location>
    <ligand>
        <name>D-glucose</name>
        <dbReference type="ChEBI" id="CHEBI:4167"/>
        <label>1</label>
    </ligand>
</feature>
<feature type="binding site" evidence="2">
    <location>
        <begin position="208"/>
        <end position="209"/>
    </location>
    <ligand>
        <name>D-glucose</name>
        <dbReference type="ChEBI" id="CHEBI:4167"/>
        <label>1</label>
    </ligand>
</feature>
<feature type="binding site" evidence="2">
    <location>
        <position position="209"/>
    </location>
    <ligand>
        <name>D-glucose 6-phosphate</name>
        <dbReference type="ChEBI" id="CHEBI:61548"/>
        <label>1</label>
    </ligand>
</feature>
<feature type="binding site" evidence="2">
    <location>
        <position position="232"/>
    </location>
    <ligand>
        <name>D-glucose 6-phosphate</name>
        <dbReference type="ChEBI" id="CHEBI:61548"/>
        <label>1</label>
    </ligand>
</feature>
<feature type="binding site" evidence="2">
    <location>
        <position position="235"/>
    </location>
    <ligand>
        <name>D-glucose</name>
        <dbReference type="ChEBI" id="CHEBI:4167"/>
        <label>1</label>
    </ligand>
</feature>
<feature type="binding site" evidence="2">
    <location>
        <position position="260"/>
    </location>
    <ligand>
        <name>D-glucose</name>
        <dbReference type="ChEBI" id="CHEBI:4167"/>
        <label>1</label>
    </ligand>
</feature>
<feature type="binding site" evidence="2">
    <location>
        <begin position="291"/>
        <end position="294"/>
    </location>
    <ligand>
        <name>D-glucose</name>
        <dbReference type="ChEBI" id="CHEBI:4167"/>
        <label>1</label>
    </ligand>
</feature>
<feature type="binding site" evidence="2">
    <location>
        <begin position="413"/>
        <end position="415"/>
    </location>
    <ligand>
        <name>D-glucose 6-phosphate</name>
        <dbReference type="ChEBI" id="CHEBI:61548"/>
        <label>1</label>
    </ligand>
</feature>
<feature type="binding site" evidence="1">
    <location>
        <begin position="425"/>
        <end position="426"/>
    </location>
    <ligand>
        <name>ATP</name>
        <dbReference type="ChEBI" id="CHEBI:30616"/>
        <label>1</label>
    </ligand>
</feature>
<feature type="binding site" evidence="2">
    <location>
        <position position="449"/>
    </location>
    <ligand>
        <name>D-glucose 6-phosphate</name>
        <dbReference type="ChEBI" id="CHEBI:61548"/>
        <label>1</label>
    </ligand>
</feature>
<feature type="binding site" evidence="1">
    <location>
        <begin position="532"/>
        <end position="537"/>
    </location>
    <ligand>
        <name>ATP</name>
        <dbReference type="ChEBI" id="CHEBI:30616"/>
        <label>2</label>
    </ligand>
</feature>
<feature type="binding site" evidence="2">
    <location>
        <begin position="532"/>
        <end position="536"/>
    </location>
    <ligand>
        <name>D-glucose 6-phosphate</name>
        <dbReference type="ChEBI" id="CHEBI:61548"/>
        <label>2</label>
    </ligand>
</feature>
<feature type="binding site" evidence="2">
    <location>
        <begin position="603"/>
        <end position="604"/>
    </location>
    <ligand>
        <name>D-glucose</name>
        <dbReference type="ChEBI" id="CHEBI:4167"/>
        <label>2</label>
    </ligand>
</feature>
<feature type="binding site" evidence="2">
    <location>
        <begin position="620"/>
        <end position="621"/>
    </location>
    <ligand>
        <name>D-glucose</name>
        <dbReference type="ChEBI" id="CHEBI:4167"/>
        <label>2</label>
    </ligand>
</feature>
<feature type="binding site" evidence="2">
    <location>
        <begin position="656"/>
        <end position="657"/>
    </location>
    <ligand>
        <name>D-glucose</name>
        <dbReference type="ChEBI" id="CHEBI:4167"/>
        <label>2</label>
    </ligand>
</feature>
<feature type="binding site" evidence="2">
    <location>
        <position position="657"/>
    </location>
    <ligand>
        <name>D-glucose 6-phosphate</name>
        <dbReference type="ChEBI" id="CHEBI:61548"/>
        <label>2</label>
    </ligand>
</feature>
<feature type="binding site" evidence="1">
    <location>
        <position position="680"/>
    </location>
    <ligand>
        <name>ATP</name>
        <dbReference type="ChEBI" id="CHEBI:30616"/>
        <label>2</label>
    </ligand>
</feature>
<feature type="binding site" evidence="2">
    <location>
        <position position="680"/>
    </location>
    <ligand>
        <name>D-glucose 6-phosphate</name>
        <dbReference type="ChEBI" id="CHEBI:61548"/>
        <label>2</label>
    </ligand>
</feature>
<feature type="binding site" evidence="2">
    <location>
        <begin position="682"/>
        <end position="683"/>
    </location>
    <ligand>
        <name>D-glucose</name>
        <dbReference type="ChEBI" id="CHEBI:4167"/>
        <label>2</label>
    </ligand>
</feature>
<feature type="binding site" evidence="2">
    <location>
        <position position="708"/>
    </location>
    <ligand>
        <name>D-glucose</name>
        <dbReference type="ChEBI" id="CHEBI:4167"/>
        <label>2</label>
    </ligand>
</feature>
<feature type="binding site" evidence="2">
    <location>
        <begin position="739"/>
        <end position="742"/>
    </location>
    <ligand>
        <name>D-glucose</name>
        <dbReference type="ChEBI" id="CHEBI:4167"/>
        <label>2</label>
    </ligand>
</feature>
<feature type="binding site" evidence="1">
    <location>
        <begin position="747"/>
        <end position="748"/>
    </location>
    <ligand>
        <name>ATP</name>
        <dbReference type="ChEBI" id="CHEBI:30616"/>
        <label>2</label>
    </ligand>
</feature>
<feature type="binding site" evidence="1">
    <location>
        <begin position="784"/>
        <end position="788"/>
    </location>
    <ligand>
        <name>ATP</name>
        <dbReference type="ChEBI" id="CHEBI:30616"/>
        <label>2</label>
    </ligand>
</feature>
<feature type="binding site" evidence="2">
    <location>
        <begin position="861"/>
        <end position="863"/>
    </location>
    <ligand>
        <name>D-glucose 6-phosphate</name>
        <dbReference type="ChEBI" id="CHEBI:61548"/>
        <label>2</label>
    </ligand>
</feature>
<feature type="binding site" evidence="1">
    <location>
        <begin position="863"/>
        <end position="867"/>
    </location>
    <ligand>
        <name>ATP</name>
        <dbReference type="ChEBI" id="CHEBI:30616"/>
        <label>2</label>
    </ligand>
</feature>
<feature type="binding site" evidence="2">
    <location>
        <position position="897"/>
    </location>
    <ligand>
        <name>D-glucose 6-phosphate</name>
        <dbReference type="ChEBI" id="CHEBI:61548"/>
        <label>2</label>
    </ligand>
</feature>
<feature type="modified residue" description="N-acetylmethionine" evidence="2">
    <location>
        <position position="1"/>
    </location>
</feature>
<dbReference type="EC" id="2.7.1.1" evidence="4"/>
<dbReference type="EMBL" id="M68971">
    <property type="protein sequence ID" value="AAA41333.1"/>
    <property type="molecule type" value="mRNA"/>
</dbReference>
<dbReference type="EMBL" id="M68972">
    <property type="protein sequence ID" value="AAA41334.1"/>
    <property type="molecule type" value="mRNA"/>
</dbReference>
<dbReference type="EMBL" id="D26393">
    <property type="protein sequence ID" value="BAA05409.1"/>
    <property type="molecule type" value="Genomic_DNA"/>
</dbReference>
<dbReference type="EMBL" id="U19605">
    <property type="protein sequence ID" value="AAB09025.1"/>
    <property type="molecule type" value="Genomic_DNA"/>
</dbReference>
<dbReference type="EMBL" id="AY082375">
    <property type="protein sequence ID" value="AAL92551.1"/>
    <property type="molecule type" value="Genomic_DNA"/>
</dbReference>
<dbReference type="PIR" id="S15885">
    <property type="entry name" value="S15885"/>
</dbReference>
<dbReference type="RefSeq" id="NP_036867.1">
    <property type="nucleotide sequence ID" value="NM_012735.2"/>
</dbReference>
<dbReference type="SMR" id="P27881"/>
<dbReference type="BioGRID" id="247136">
    <property type="interactions" value="4"/>
</dbReference>
<dbReference type="DIP" id="DIP-37314N"/>
<dbReference type="FunCoup" id="P27881">
    <property type="interactions" value="291"/>
</dbReference>
<dbReference type="IntAct" id="P27881">
    <property type="interactions" value="3"/>
</dbReference>
<dbReference type="STRING" id="10116.ENSRNOP00000008813"/>
<dbReference type="BindingDB" id="P27881"/>
<dbReference type="ChEMBL" id="CHEMBL5063"/>
<dbReference type="iPTMnet" id="P27881"/>
<dbReference type="PhosphoSitePlus" id="P27881"/>
<dbReference type="jPOST" id="P27881"/>
<dbReference type="PaxDb" id="10116-ENSRNOP00000008813"/>
<dbReference type="Ensembl" id="ENSRNOT00000008813.4">
    <property type="protein sequence ID" value="ENSRNOP00000008813.1"/>
    <property type="gene ID" value="ENSRNOG00000006116.4"/>
</dbReference>
<dbReference type="GeneID" id="25059"/>
<dbReference type="KEGG" id="rno:25059"/>
<dbReference type="UCSC" id="RGD:2797">
    <property type="organism name" value="rat"/>
</dbReference>
<dbReference type="AGR" id="RGD:2797"/>
<dbReference type="CTD" id="3099"/>
<dbReference type="RGD" id="2797">
    <property type="gene designation" value="Hk2"/>
</dbReference>
<dbReference type="eggNOG" id="KOG1369">
    <property type="taxonomic scope" value="Eukaryota"/>
</dbReference>
<dbReference type="GeneTree" id="ENSGT00950000182787"/>
<dbReference type="HOGENOM" id="CLU_014393_1_0_1"/>
<dbReference type="InParanoid" id="P27881"/>
<dbReference type="OMA" id="SYLVSWT"/>
<dbReference type="OrthoDB" id="419537at2759"/>
<dbReference type="PhylomeDB" id="P27881"/>
<dbReference type="TreeFam" id="TF314238"/>
<dbReference type="BRENDA" id="2.7.1.1">
    <property type="organism ID" value="5301"/>
</dbReference>
<dbReference type="Reactome" id="R-RNO-70171">
    <property type="pathway name" value="Glycolysis"/>
</dbReference>
<dbReference type="SABIO-RK" id="P27881"/>
<dbReference type="UniPathway" id="UPA00109">
    <property type="reaction ID" value="UER00180"/>
</dbReference>
<dbReference type="UniPathway" id="UPA00242"/>
<dbReference type="PRO" id="PR:P27881"/>
<dbReference type="Proteomes" id="UP000002494">
    <property type="component" value="Chromosome 4"/>
</dbReference>
<dbReference type="Bgee" id="ENSRNOG00000006116">
    <property type="expression patterns" value="Expressed in skeletal muscle tissue and 19 other cell types or tissues"/>
</dbReference>
<dbReference type="GO" id="GO:0005813">
    <property type="term" value="C:centrosome"/>
    <property type="evidence" value="ECO:0007669"/>
    <property type="project" value="Ensembl"/>
</dbReference>
<dbReference type="GO" id="GO:0005829">
    <property type="term" value="C:cytosol"/>
    <property type="evidence" value="ECO:0000318"/>
    <property type="project" value="GO_Central"/>
</dbReference>
<dbReference type="GO" id="GO:0005741">
    <property type="term" value="C:mitochondrial outer membrane"/>
    <property type="evidence" value="ECO:0000266"/>
    <property type="project" value="RGD"/>
</dbReference>
<dbReference type="GO" id="GO:0005739">
    <property type="term" value="C:mitochondrion"/>
    <property type="evidence" value="ECO:0000318"/>
    <property type="project" value="GO_Central"/>
</dbReference>
<dbReference type="GO" id="GO:0016529">
    <property type="term" value="C:sarcoplasmic reticulum"/>
    <property type="evidence" value="ECO:0000314"/>
    <property type="project" value="RGD"/>
</dbReference>
<dbReference type="GO" id="GO:0005524">
    <property type="term" value="F:ATP binding"/>
    <property type="evidence" value="ECO:0000314"/>
    <property type="project" value="RGD"/>
</dbReference>
<dbReference type="GO" id="GO:0005536">
    <property type="term" value="F:D-glucose binding"/>
    <property type="evidence" value="ECO:0000314"/>
    <property type="project" value="RGD"/>
</dbReference>
<dbReference type="GO" id="GO:0008865">
    <property type="term" value="F:fructokinase activity"/>
    <property type="evidence" value="ECO:0000314"/>
    <property type="project" value="UniProtKB"/>
</dbReference>
<dbReference type="GO" id="GO:0004340">
    <property type="term" value="F:glucokinase activity"/>
    <property type="evidence" value="ECO:0000314"/>
    <property type="project" value="UniProtKB"/>
</dbReference>
<dbReference type="GO" id="GO:0004396">
    <property type="term" value="F:hexokinase activity"/>
    <property type="evidence" value="ECO:0000314"/>
    <property type="project" value="RGD"/>
</dbReference>
<dbReference type="GO" id="GO:0008637">
    <property type="term" value="P:apoptotic mitochondrial changes"/>
    <property type="evidence" value="ECO:0000266"/>
    <property type="project" value="RGD"/>
</dbReference>
<dbReference type="GO" id="GO:0061621">
    <property type="term" value="P:canonical glycolysis"/>
    <property type="evidence" value="ECO:0000266"/>
    <property type="project" value="RGD"/>
</dbReference>
<dbReference type="GO" id="GO:0046835">
    <property type="term" value="P:carbohydrate phosphorylation"/>
    <property type="evidence" value="ECO:0000314"/>
    <property type="project" value="RGD"/>
</dbReference>
<dbReference type="GO" id="GO:1990830">
    <property type="term" value="P:cellular response to leukemia inhibitory factor"/>
    <property type="evidence" value="ECO:0000266"/>
    <property type="project" value="RGD"/>
</dbReference>
<dbReference type="GO" id="GO:0072655">
    <property type="term" value="P:establishment of protein localization to mitochondrion"/>
    <property type="evidence" value="ECO:0000266"/>
    <property type="project" value="RGD"/>
</dbReference>
<dbReference type="GO" id="GO:0006002">
    <property type="term" value="P:fructose 6-phosphate metabolic process"/>
    <property type="evidence" value="ECO:0000314"/>
    <property type="project" value="UniProtKB"/>
</dbReference>
<dbReference type="GO" id="GO:0051156">
    <property type="term" value="P:glucose 6-phosphate metabolic process"/>
    <property type="evidence" value="ECO:0000314"/>
    <property type="project" value="UniProtKB"/>
</dbReference>
<dbReference type="GO" id="GO:0006007">
    <property type="term" value="P:glucose catabolic process"/>
    <property type="evidence" value="ECO:0000304"/>
    <property type="project" value="RGD"/>
</dbReference>
<dbReference type="GO" id="GO:0006006">
    <property type="term" value="P:glucose metabolic process"/>
    <property type="evidence" value="ECO:0000266"/>
    <property type="project" value="RGD"/>
</dbReference>
<dbReference type="GO" id="GO:0006096">
    <property type="term" value="P:glycolytic process"/>
    <property type="evidence" value="ECO:0000318"/>
    <property type="project" value="GO_Central"/>
</dbReference>
<dbReference type="GO" id="GO:0001678">
    <property type="term" value="P:intracellular glucose homeostasis"/>
    <property type="evidence" value="ECO:0000318"/>
    <property type="project" value="GO_Central"/>
</dbReference>
<dbReference type="GO" id="GO:0007595">
    <property type="term" value="P:lactation"/>
    <property type="evidence" value="ECO:0000270"/>
    <property type="project" value="RGD"/>
</dbReference>
<dbReference type="GO" id="GO:0072656">
    <property type="term" value="P:maintenance of protein location in mitochondrion"/>
    <property type="evidence" value="ECO:0000266"/>
    <property type="project" value="RGD"/>
</dbReference>
<dbReference type="GO" id="GO:0035795">
    <property type="term" value="P:negative regulation of mitochondrial membrane permeability"/>
    <property type="evidence" value="ECO:0000266"/>
    <property type="project" value="RGD"/>
</dbReference>
<dbReference type="GO" id="GO:2000378">
    <property type="term" value="P:negative regulation of reactive oxygen species metabolic process"/>
    <property type="evidence" value="ECO:0000266"/>
    <property type="project" value="RGD"/>
</dbReference>
<dbReference type="GO" id="GO:0045766">
    <property type="term" value="P:positive regulation of angiogenesis"/>
    <property type="evidence" value="ECO:0000266"/>
    <property type="project" value="RGD"/>
</dbReference>
<dbReference type="GO" id="GO:1905091">
    <property type="term" value="P:positive regulation of type 2 mitophagy"/>
    <property type="evidence" value="ECO:0000266"/>
    <property type="project" value="RGD"/>
</dbReference>
<dbReference type="GO" id="GO:0046324">
    <property type="term" value="P:regulation of D-glucose import"/>
    <property type="evidence" value="ECO:0000266"/>
    <property type="project" value="RGD"/>
</dbReference>
<dbReference type="GO" id="GO:0001666">
    <property type="term" value="P:response to hypoxia"/>
    <property type="evidence" value="ECO:0000270"/>
    <property type="project" value="RGD"/>
</dbReference>
<dbReference type="GO" id="GO:0002931">
    <property type="term" value="P:response to ischemia"/>
    <property type="evidence" value="ECO:0000314"/>
    <property type="project" value="RGD"/>
</dbReference>
<dbReference type="CDD" id="cd24128">
    <property type="entry name" value="ASKHA_NBD_HK2_meta_rpt2"/>
    <property type="match status" value="1"/>
</dbReference>
<dbReference type="FunFam" id="3.30.420.40:FF:000015">
    <property type="entry name" value="Hexokinase 1"/>
    <property type="match status" value="1"/>
</dbReference>
<dbReference type="FunFam" id="3.40.367.20:FF:000001">
    <property type="entry name" value="Hexokinase 1"/>
    <property type="match status" value="1"/>
</dbReference>
<dbReference type="FunFam" id="3.40.367.20:FF:000020">
    <property type="entry name" value="Hexokinase-1"/>
    <property type="match status" value="1"/>
</dbReference>
<dbReference type="FunFam" id="3.30.420.40:FF:000805">
    <property type="entry name" value="Hexokinase-2"/>
    <property type="match status" value="1"/>
</dbReference>
<dbReference type="Gene3D" id="3.30.420.40">
    <property type="match status" value="2"/>
</dbReference>
<dbReference type="Gene3D" id="3.40.367.20">
    <property type="match status" value="2"/>
</dbReference>
<dbReference type="InterPro" id="IPR043129">
    <property type="entry name" value="ATPase_NBD"/>
</dbReference>
<dbReference type="InterPro" id="IPR001312">
    <property type="entry name" value="Hexokinase"/>
</dbReference>
<dbReference type="InterPro" id="IPR019807">
    <property type="entry name" value="Hexokinase_BS"/>
</dbReference>
<dbReference type="InterPro" id="IPR022673">
    <property type="entry name" value="Hexokinase_C"/>
</dbReference>
<dbReference type="InterPro" id="IPR022672">
    <property type="entry name" value="Hexokinase_N"/>
</dbReference>
<dbReference type="PANTHER" id="PTHR19443">
    <property type="entry name" value="HEXOKINASE"/>
    <property type="match status" value="1"/>
</dbReference>
<dbReference type="PANTHER" id="PTHR19443:SF4">
    <property type="entry name" value="HEXOKINASE-2"/>
    <property type="match status" value="1"/>
</dbReference>
<dbReference type="Pfam" id="PF00349">
    <property type="entry name" value="Hexokinase_1"/>
    <property type="match status" value="2"/>
</dbReference>
<dbReference type="Pfam" id="PF03727">
    <property type="entry name" value="Hexokinase_2"/>
    <property type="match status" value="2"/>
</dbReference>
<dbReference type="PRINTS" id="PR00475">
    <property type="entry name" value="HEXOKINASE"/>
</dbReference>
<dbReference type="SUPFAM" id="SSF53067">
    <property type="entry name" value="Actin-like ATPase domain"/>
    <property type="match status" value="4"/>
</dbReference>
<dbReference type="PROSITE" id="PS00378">
    <property type="entry name" value="HEXOKINASE_1"/>
    <property type="match status" value="2"/>
</dbReference>
<dbReference type="PROSITE" id="PS51748">
    <property type="entry name" value="HEXOKINASE_2"/>
    <property type="match status" value="2"/>
</dbReference>
<sequence>MIASHMIACLFTELNQNQVQKVDQFLYHMRLSDETLLEISRRFRKEMEKGLGATTHPTAAVKMLPTFVRSTPDGTEHGEFLALDLGGTNFRVLRVRVTDNGLQRVEMENQIYAIPEDIMRGSGTQLFDHIAECLANFMDKLQIKEKKLPLGFTFSFPCHQTKLDESFLVSWTKGFKSSGVEGRDVVDLIRKAIQRRGDFDIDIVAVVNDTVGTMMTCGYDDQNCEIGLIVGTGSNACYMEEMRHIDMVEGDEGRMCINMEWGAFGDDGTLNDIRTEFDREIDMGSLNPGKQLFEKMISGMYMGELVRLILVKMAKAELLFQGKLSPELLTTGSFETKDVSDIEEDKDGIEKAYQILMRLGLNPLQEDCVATHRICQIVSTRSASLCAATLAAVLWRIKENKGEERLRSTIGVDGSVYKKHPHFAKRLHKAVRRLVPDCDVRFLRSEDGSGKGAAMVTAVAYRLADQHRARQKTLESLKLSHEQLLEVKRRMKVEMEQGLSKETHAVAPVKMLPTYVCATPDGTEKGDFLALDLGGTNFRVLLVRVRNGKRRGVEMHNKIYSIPQEVMHGTGEELFDHIVQCIADFLEYMGMKGVSLPLGFTFSFPCQQNSLDQSILLKWTKGFKASGCEGEDVVTLLKEAIHRREEFDLDVVAVVNDTVGTMMTCGYEDPHCEVGLIVGTGSNACYMEEMRNVELVDGEEGRMCVNMEWGAFGDNGCLDDLRTVFDVAVDELSLNPGKQRFEKMISGMYLGEIVRNILIDFTKRGLLFRGRISERLKTRGIFETKFLSQIESDCLALLQVRAILRHLGLESTCDDSIIVKEVCTVVARRAAQLCGAGMAAVVDKIRENRGLDNLKVTVGVDGTLYKLHPHFAKVMHETVRDLAPKCDVSFLESEDGSGKGAALITAVACRIREAGQR</sequence>
<comment type="function">
    <text evidence="2 4">Catalyzes the phosphorylation of hexose, such as D-glucose and D-fructose, to hexose 6-phosphate (D-glucose 6-phosphate and D-fructose 6-phosphate, respectively) (PubMed:5871820). Mediates the initial step of glycolysis by catalyzing phosphorylation of D-glucose to D-glucose 6-phosphate (PubMed:5871820). Plays a key role in maintaining the integrity of the outer mitochondrial membrane by preventing the release of apoptogenic molecules from the intermembrane space and subsequent apoptosis (By similarity).</text>
</comment>
<comment type="catalytic activity">
    <reaction evidence="4">
        <text>a D-hexose + ATP = a D-hexose 6-phosphate + ADP + H(+)</text>
        <dbReference type="Rhea" id="RHEA:22740"/>
        <dbReference type="ChEBI" id="CHEBI:4194"/>
        <dbReference type="ChEBI" id="CHEBI:15378"/>
        <dbReference type="ChEBI" id="CHEBI:30616"/>
        <dbReference type="ChEBI" id="CHEBI:229467"/>
        <dbReference type="ChEBI" id="CHEBI:456216"/>
        <dbReference type="EC" id="2.7.1.1"/>
    </reaction>
    <physiologicalReaction direction="left-to-right" evidence="4">
        <dbReference type="Rhea" id="RHEA:22741"/>
    </physiologicalReaction>
</comment>
<comment type="catalytic activity">
    <reaction evidence="4">
        <text>D-fructose + ATP = D-fructose 6-phosphate + ADP + H(+)</text>
        <dbReference type="Rhea" id="RHEA:16125"/>
        <dbReference type="ChEBI" id="CHEBI:15378"/>
        <dbReference type="ChEBI" id="CHEBI:30616"/>
        <dbReference type="ChEBI" id="CHEBI:37721"/>
        <dbReference type="ChEBI" id="CHEBI:61527"/>
        <dbReference type="ChEBI" id="CHEBI:456216"/>
        <dbReference type="EC" id="2.7.1.1"/>
    </reaction>
    <physiologicalReaction direction="left-to-right" evidence="4">
        <dbReference type="Rhea" id="RHEA:16126"/>
    </physiologicalReaction>
</comment>
<comment type="catalytic activity">
    <reaction evidence="4">
        <text>D-glucose + ATP = D-glucose 6-phosphate + ADP + H(+)</text>
        <dbReference type="Rhea" id="RHEA:17825"/>
        <dbReference type="ChEBI" id="CHEBI:4167"/>
        <dbReference type="ChEBI" id="CHEBI:15378"/>
        <dbReference type="ChEBI" id="CHEBI:30616"/>
        <dbReference type="ChEBI" id="CHEBI:61548"/>
        <dbReference type="ChEBI" id="CHEBI:456216"/>
        <dbReference type="EC" id="2.7.1.1"/>
    </reaction>
    <physiologicalReaction direction="left-to-right" evidence="4">
        <dbReference type="Rhea" id="RHEA:17826"/>
    </physiologicalReaction>
</comment>
<comment type="activity regulation">
    <text evidence="2">Hexokinase activity is specifically inhibited by 2,6-disubstituted glucosamines.</text>
</comment>
<comment type="biophysicochemical properties">
    <kinetics>
        <KM evidence="4">0.13 mM for D-glucose</KM>
        <KM evidence="4">3 mM for D-fructose</KM>
        <KM evidence="4">0.7 mM for ATP</KM>
    </kinetics>
</comment>
<comment type="pathway">
    <text evidence="8">Carbohydrate metabolism; hexose metabolism.</text>
</comment>
<comment type="pathway">
    <text evidence="8">Carbohydrate degradation; glycolysis; D-glyceraldehyde 3-phosphate and glycerone phosphate from D-glucose: step 1/4.</text>
</comment>
<comment type="subunit">
    <text evidence="1 2">Monomer (By similarity). Interacts with TIGAR; the interaction increases hexokinase activity in a hypoxia- and HIF1A-dependent manner (By similarity).</text>
</comment>
<comment type="subcellular location">
    <subcellularLocation>
        <location evidence="2">Mitochondrion outer membrane</location>
        <topology evidence="2">Peripheral membrane protein</topology>
    </subcellularLocation>
    <subcellularLocation>
        <location evidence="2">Cytoplasm</location>
        <location evidence="2">Cytosol</location>
    </subcellularLocation>
    <text evidence="2">The mitochondrial-binding peptide (MBP) region promotes association with the mitochondrial outer membrane. The interaction with the mitochondrial outer membrane via the mitochondrial-binding peptide (MBP) region promotes higher stability of the protein. Release from the mitochondrial outer membrane into the cytosol induces permeability transition pore (PTP) opening and apoptosis.</text>
</comment>
<comment type="domain">
    <text evidence="2">The N- and C-terminal halves of the protein contain a hexokinase domain. In contrast to hexokinase-1 and -3 (HK1 and HK3, respectively), both hexokinase domains display catalytic activity. The region connecting the two hexokinase domains is required for the catalytic activity of the N-terminal hexokinase domain. The N-terminal half regulates stability of the whole enzyme.</text>
</comment>
<comment type="similarity">
    <text evidence="3 7">Belongs to the hexokinase family.</text>
</comment>